<proteinExistence type="evidence at transcript level"/>
<dbReference type="EC" id="2.7.7.108" evidence="2"/>
<dbReference type="EC" id="3.1.4.-" evidence="1"/>
<dbReference type="EMBL" id="BC079197">
    <property type="protein sequence ID" value="AAH79197.1"/>
    <property type="molecule type" value="mRNA"/>
</dbReference>
<dbReference type="RefSeq" id="NP_001010946.1">
    <property type="nucleotide sequence ID" value="NM_001010946.1"/>
</dbReference>
<dbReference type="RefSeq" id="XP_008767542.1">
    <property type="nucleotide sequence ID" value="XM_008769320.4"/>
</dbReference>
<dbReference type="RefSeq" id="XP_008767543.1">
    <property type="nucleotide sequence ID" value="XM_008769321.4"/>
</dbReference>
<dbReference type="SMR" id="Q6AY47"/>
<dbReference type="FunCoup" id="Q6AY47">
    <property type="interactions" value="627"/>
</dbReference>
<dbReference type="STRING" id="10116.ENSRNOP00000073778"/>
<dbReference type="GlyCosmos" id="Q6AY47">
    <property type="glycosylation" value="1 site, No reported glycans"/>
</dbReference>
<dbReference type="GlyGen" id="Q6AY47">
    <property type="glycosylation" value="1 site"/>
</dbReference>
<dbReference type="PhosphoSitePlus" id="Q6AY47"/>
<dbReference type="PaxDb" id="10116-ENSRNOP00000000892"/>
<dbReference type="GeneID" id="288741"/>
<dbReference type="KEGG" id="rno:288741"/>
<dbReference type="UCSC" id="RGD:1359391">
    <property type="organism name" value="rat"/>
</dbReference>
<dbReference type="AGR" id="RGD:1359391"/>
<dbReference type="CTD" id="11153"/>
<dbReference type="RGD" id="1359391">
    <property type="gene designation" value="Ficd"/>
</dbReference>
<dbReference type="VEuPathDB" id="HostDB:ENSRNOG00000059799"/>
<dbReference type="eggNOG" id="KOG3824">
    <property type="taxonomic scope" value="Eukaryota"/>
</dbReference>
<dbReference type="HOGENOM" id="CLU_040460_0_0_1"/>
<dbReference type="InParanoid" id="Q6AY47"/>
<dbReference type="OrthoDB" id="439046at2759"/>
<dbReference type="PhylomeDB" id="Q6AY47"/>
<dbReference type="TreeFam" id="TF314692"/>
<dbReference type="PRO" id="PR:Q6AY47"/>
<dbReference type="Proteomes" id="UP000002494">
    <property type="component" value="Chromosome 12"/>
</dbReference>
<dbReference type="Bgee" id="ENSRNOG00000059799">
    <property type="expression patterns" value="Expressed in pancreas and 19 other cell types or tissues"/>
</dbReference>
<dbReference type="GO" id="GO:0005783">
    <property type="term" value="C:endoplasmic reticulum"/>
    <property type="evidence" value="ECO:0000250"/>
    <property type="project" value="UniProtKB"/>
</dbReference>
<dbReference type="GO" id="GO:0005789">
    <property type="term" value="C:endoplasmic reticulum membrane"/>
    <property type="evidence" value="ECO:0000250"/>
    <property type="project" value="UniProtKB"/>
</dbReference>
<dbReference type="GO" id="GO:0070733">
    <property type="term" value="F:AMPylase activity"/>
    <property type="evidence" value="ECO:0000250"/>
    <property type="project" value="UniProtKB"/>
</dbReference>
<dbReference type="GO" id="GO:0005524">
    <property type="term" value="F:ATP binding"/>
    <property type="evidence" value="ECO:0000250"/>
    <property type="project" value="UniProtKB"/>
</dbReference>
<dbReference type="GO" id="GO:0030544">
    <property type="term" value="F:Hsp70 protein binding"/>
    <property type="evidence" value="ECO:0000266"/>
    <property type="project" value="RGD"/>
</dbReference>
<dbReference type="GO" id="GO:0042802">
    <property type="term" value="F:identical protein binding"/>
    <property type="evidence" value="ECO:0000266"/>
    <property type="project" value="RGD"/>
</dbReference>
<dbReference type="GO" id="GO:0044603">
    <property type="term" value="F:protein adenylylhydrolase activity"/>
    <property type="evidence" value="ECO:0000250"/>
    <property type="project" value="UniProtKB"/>
</dbReference>
<dbReference type="GO" id="GO:0042803">
    <property type="term" value="F:protein homodimerization activity"/>
    <property type="evidence" value="ECO:0000250"/>
    <property type="project" value="UniProtKB"/>
</dbReference>
<dbReference type="GO" id="GO:0051087">
    <property type="term" value="F:protein-folding chaperone binding"/>
    <property type="evidence" value="ECO:0000250"/>
    <property type="project" value="UniProtKB"/>
</dbReference>
<dbReference type="GO" id="GO:0018117">
    <property type="term" value="P:protein adenylylation"/>
    <property type="evidence" value="ECO:0000250"/>
    <property type="project" value="UniProtKB"/>
</dbReference>
<dbReference type="GO" id="GO:0044602">
    <property type="term" value="P:protein deadenylylation"/>
    <property type="evidence" value="ECO:0000250"/>
    <property type="project" value="UniProtKB"/>
</dbReference>
<dbReference type="GO" id="GO:1903894">
    <property type="term" value="P:regulation of IRE1-mediated unfolded protein response"/>
    <property type="evidence" value="ECO:0000250"/>
    <property type="project" value="UniProtKB"/>
</dbReference>
<dbReference type="GO" id="GO:0034976">
    <property type="term" value="P:response to endoplasmic reticulum stress"/>
    <property type="evidence" value="ECO:0000250"/>
    <property type="project" value="UniProtKB"/>
</dbReference>
<dbReference type="GO" id="GO:0006986">
    <property type="term" value="P:response to unfolded protein"/>
    <property type="evidence" value="ECO:0007669"/>
    <property type="project" value="UniProtKB-KW"/>
</dbReference>
<dbReference type="FunFam" id="1.10.3290.10:FF:000001">
    <property type="entry name" value="adenosine monophosphate-protein transferase FICD"/>
    <property type="match status" value="1"/>
</dbReference>
<dbReference type="FunFam" id="1.25.40.10:FF:000188">
    <property type="entry name" value="adenosine monophosphate-protein transferase FICD"/>
    <property type="match status" value="1"/>
</dbReference>
<dbReference type="Gene3D" id="1.10.3290.10">
    <property type="entry name" value="Fido-like domain"/>
    <property type="match status" value="1"/>
</dbReference>
<dbReference type="Gene3D" id="1.25.40.10">
    <property type="entry name" value="Tetratricopeptide repeat domain"/>
    <property type="match status" value="1"/>
</dbReference>
<dbReference type="InterPro" id="IPR003812">
    <property type="entry name" value="Fido"/>
</dbReference>
<dbReference type="InterPro" id="IPR036597">
    <property type="entry name" value="Fido-like_dom_sf"/>
</dbReference>
<dbReference type="InterPro" id="IPR040198">
    <property type="entry name" value="Fido_containing"/>
</dbReference>
<dbReference type="InterPro" id="IPR011990">
    <property type="entry name" value="TPR-like_helical_dom_sf"/>
</dbReference>
<dbReference type="PANTHER" id="PTHR13504">
    <property type="entry name" value="FIDO DOMAIN-CONTAINING PROTEIN DDB_G0283145"/>
    <property type="match status" value="1"/>
</dbReference>
<dbReference type="PANTHER" id="PTHR13504:SF34">
    <property type="entry name" value="PROTEIN ADENYLYLTRANSFERASE FICD"/>
    <property type="match status" value="1"/>
</dbReference>
<dbReference type="Pfam" id="PF02661">
    <property type="entry name" value="Fic"/>
    <property type="match status" value="1"/>
</dbReference>
<dbReference type="SUPFAM" id="SSF140931">
    <property type="entry name" value="Fic-like"/>
    <property type="match status" value="1"/>
</dbReference>
<dbReference type="SUPFAM" id="SSF48452">
    <property type="entry name" value="TPR-like"/>
    <property type="match status" value="1"/>
</dbReference>
<dbReference type="PROSITE" id="PS51459">
    <property type="entry name" value="FIDO"/>
    <property type="match status" value="1"/>
</dbReference>
<dbReference type="PROSITE" id="PS50293">
    <property type="entry name" value="TPR_REGION"/>
    <property type="match status" value="1"/>
</dbReference>
<gene>
    <name evidence="6" type="primary">Ficd</name>
</gene>
<sequence length="458" mass="51754">MILMPMASVVAVAEPKWVSVWGRFLWMTLLSMALGSLLALLLPLGAVEEQCLAVLRGFHLLRSKLDRAQHVVTKCTSPSTELSVTSRDAGLLTVKTKASPAGKLEAKAALNQALEMKRQGKRGKAHKLFLHALKMDPGFVDALNELGIFSEEDKDIIQADYLYTRALTISPFHEKALINRDRTLPLVEEIDQRYFSVLDSKVRKVMSIPKGSSALRRVMEETYYHHIYHTVAIEGNTLTLAEIRHILETRYAVPGKSLEEQNEVIGMHAAMKYINSTLVSRIGSVTIDHMLEIHRRVLGYVDPVEAGRFRRTQVLVGHHIPPHPRDVEKQMQEFTQWLNSEDAMNLHPVEFAALAHYKLVYIHPFIDGNGRTSRLLMNLILMQAGYPPITIRKEQRSEYYHVLEVANEGDVRPFIRFIAKCTEVTLDTLLLATTEYSAALPEAQPNHSGFKETLPVRP</sequence>
<protein>
    <recommendedName>
        <fullName evidence="5">Protein adenylyltransferase FICD</fullName>
        <ecNumber evidence="2">2.7.7.108</ecNumber>
    </recommendedName>
    <alternativeName>
        <fullName evidence="2">AMPylator FICD</fullName>
    </alternativeName>
    <alternativeName>
        <fullName evidence="1">De-AMPylase FICD</fullName>
        <ecNumber evidence="1">3.1.4.-</ecNumber>
    </alternativeName>
    <alternativeName>
        <fullName evidence="2">FIC domain-containing protein</fullName>
    </alternativeName>
</protein>
<evidence type="ECO:0000250" key="1">
    <source>
        <dbReference type="UniProtKB" id="A0A061I403"/>
    </source>
</evidence>
<evidence type="ECO:0000250" key="2">
    <source>
        <dbReference type="UniProtKB" id="Q9BVA6"/>
    </source>
</evidence>
<evidence type="ECO:0000255" key="3"/>
<evidence type="ECO:0000255" key="4">
    <source>
        <dbReference type="PROSITE-ProRule" id="PRU00791"/>
    </source>
</evidence>
<evidence type="ECO:0000305" key="5"/>
<evidence type="ECO:0000312" key="6">
    <source>
        <dbReference type="RGD" id="1359391"/>
    </source>
</evidence>
<reference key="1">
    <citation type="journal article" date="2004" name="Genome Res.">
        <title>The status, quality, and expansion of the NIH full-length cDNA project: the Mammalian Gene Collection (MGC).</title>
        <authorList>
            <consortium name="The MGC Project Team"/>
        </authorList>
    </citation>
    <scope>NUCLEOTIDE SEQUENCE [LARGE SCALE MRNA]</scope>
    <source>
        <tissue>Testis</tissue>
    </source>
</reference>
<comment type="function">
    <text evidence="1 2">Protein that can both mediate the addition of adenosine 5'-monophosphate (AMP) to specific residues of target proteins (AMPylation), and the removal of the same modification from target proteins (de-AMPylation), depending on the context (By similarity). The side chain of Glu-231 determines which of the two opposing activities (AMPylase or de-AMPylase) will take place (By similarity). Acts as a key regulator of the ERN1/IRE1-mediated unfolded protein response (UPR) by mediating AMPylation or de-AMPylation of HSPA5/BiP (By similarity). In unstressed cells, acts as an adenylyltransferase by mediating AMPylation of HSPA5/BiP at 'Thr-518', thereby inactivating it (By similarity). In response to endoplasmic reticulum stress, acts as a phosphodiesterase by mediating removal of ATP (de-AMPylation) from HSPA5/BiP at 'Thr-518', leading to restore HSPA5/BiP activity (By similarity). Although it is able to AMPylate RhoA, Rac and Cdc42 Rho GTPases in vitro, Rho GTPases do not constitute physiological substrates (By similarity).</text>
</comment>
<comment type="catalytic activity">
    <reaction evidence="2">
        <text>L-tyrosyl-[protein] + ATP = O-(5'-adenylyl)-L-tyrosyl-[protein] + diphosphate</text>
        <dbReference type="Rhea" id="RHEA:54288"/>
        <dbReference type="Rhea" id="RHEA-COMP:10136"/>
        <dbReference type="Rhea" id="RHEA-COMP:13846"/>
        <dbReference type="ChEBI" id="CHEBI:30616"/>
        <dbReference type="ChEBI" id="CHEBI:33019"/>
        <dbReference type="ChEBI" id="CHEBI:46858"/>
        <dbReference type="ChEBI" id="CHEBI:83624"/>
        <dbReference type="EC" id="2.7.7.108"/>
    </reaction>
</comment>
<comment type="catalytic activity">
    <reaction evidence="1">
        <text>3-O-(5'-adenylyl)-L-threonyl-[protein] + H2O = L-threonyl-[protein] + AMP + H(+)</text>
        <dbReference type="Rhea" id="RHEA:55932"/>
        <dbReference type="Rhea" id="RHEA-COMP:11060"/>
        <dbReference type="Rhea" id="RHEA-COMP:13847"/>
        <dbReference type="ChEBI" id="CHEBI:15377"/>
        <dbReference type="ChEBI" id="CHEBI:15378"/>
        <dbReference type="ChEBI" id="CHEBI:30013"/>
        <dbReference type="ChEBI" id="CHEBI:138113"/>
        <dbReference type="ChEBI" id="CHEBI:456215"/>
    </reaction>
</comment>
<comment type="catalytic activity">
    <reaction evidence="2">
        <text>L-threonyl-[protein] + ATP = 3-O-(5'-adenylyl)-L-threonyl-[protein] + diphosphate</text>
        <dbReference type="Rhea" id="RHEA:54292"/>
        <dbReference type="Rhea" id="RHEA-COMP:11060"/>
        <dbReference type="Rhea" id="RHEA-COMP:13847"/>
        <dbReference type="ChEBI" id="CHEBI:30013"/>
        <dbReference type="ChEBI" id="CHEBI:30616"/>
        <dbReference type="ChEBI" id="CHEBI:33019"/>
        <dbReference type="ChEBI" id="CHEBI:138113"/>
        <dbReference type="EC" id="2.7.7.108"/>
    </reaction>
</comment>
<comment type="cofactor">
    <cofactor evidence="2">
        <name>Mg(2+)</name>
        <dbReference type="ChEBI" id="CHEBI:18420"/>
    </cofactor>
    <cofactor evidence="2">
        <name>Mn(2+)</name>
        <dbReference type="ChEBI" id="CHEBI:29035"/>
    </cofactor>
    <text evidence="2">Divalent metal cation. Prefers Mn(2+) over Mg(2+).</text>
</comment>
<comment type="activity regulation">
    <text evidence="1 2">The side chain of Glu-234 determines which of the two opposing activities (AMPylase or de-AMPylase) will take place. In response to endoplasmic reticulum stress, mediates de-AMPylase activity (By similarity). Adenylyltransferase activity is inhibited by the inhibitory helix present at the N-terminus: Glu-234 binds ATP and competes with ATP-binding at Arg-374, thereby preventing adenylyltransferase activity (By similarity). In unstressed cells, disengagement of Glu-234 promotes adenylyltransferase activity (By similarity). Activation dissociates ATP-binding from Glu-234, allowing ordered binding of the entire ATP moiety with the alpha-phosphate in an orientation that is productive for accepting an incoming target hydroxyl side chain (By similarity).</text>
</comment>
<comment type="subunit">
    <text evidence="2">Homodimer. Interacts with HD.</text>
</comment>
<comment type="subcellular location">
    <subcellularLocation>
        <location evidence="2">Endoplasmic reticulum membrane</location>
        <topology evidence="2">Single-pass type II membrane protein</topology>
    </subcellularLocation>
</comment>
<comment type="domain">
    <text evidence="2">The fido domain mediates the adenylyltransferase activity.</text>
</comment>
<comment type="PTM">
    <text evidence="2">Auto-AMPylated in vitro.</text>
</comment>
<comment type="similarity">
    <text evidence="5">Belongs to the fic family.</text>
</comment>
<organism>
    <name type="scientific">Rattus norvegicus</name>
    <name type="common">Rat</name>
    <dbReference type="NCBI Taxonomy" id="10116"/>
    <lineage>
        <taxon>Eukaryota</taxon>
        <taxon>Metazoa</taxon>
        <taxon>Chordata</taxon>
        <taxon>Craniata</taxon>
        <taxon>Vertebrata</taxon>
        <taxon>Euteleostomi</taxon>
        <taxon>Mammalia</taxon>
        <taxon>Eutheria</taxon>
        <taxon>Euarchontoglires</taxon>
        <taxon>Glires</taxon>
        <taxon>Rodentia</taxon>
        <taxon>Myomorpha</taxon>
        <taxon>Muroidea</taxon>
        <taxon>Muridae</taxon>
        <taxon>Murinae</taxon>
        <taxon>Rattus</taxon>
    </lineage>
</organism>
<name>FICD_RAT</name>
<feature type="chain" id="PRO_0000317303" description="Protein adenylyltransferase FICD">
    <location>
        <begin position="1"/>
        <end position="458"/>
    </location>
</feature>
<feature type="topological domain" description="Cytoplasmic" evidence="2">
    <location>
        <begin position="1"/>
        <end position="23"/>
    </location>
</feature>
<feature type="transmembrane region" description="Helical; Signal-anchor for type II membrane protein" evidence="3">
    <location>
        <begin position="24"/>
        <end position="44"/>
    </location>
</feature>
<feature type="topological domain" description="Lumenal" evidence="2">
    <location>
        <begin position="45"/>
        <end position="458"/>
    </location>
</feature>
<feature type="repeat" description="TPR 1">
    <location>
        <begin position="106"/>
        <end position="139"/>
    </location>
</feature>
<feature type="repeat" description="TPR 2">
    <location>
        <begin position="140"/>
        <end position="173"/>
    </location>
</feature>
<feature type="domain" description="Fido" evidence="4">
    <location>
        <begin position="285"/>
        <end position="420"/>
    </location>
</feature>
<feature type="short sequence motif" description="Inhibitory (S/T)XXXE(G/N) motif" evidence="2">
    <location>
        <begin position="230"/>
        <end position="235"/>
    </location>
</feature>
<feature type="active site" evidence="2">
    <location>
        <position position="363"/>
    </location>
</feature>
<feature type="binding site" evidence="2">
    <location>
        <position position="234"/>
    </location>
    <ligand>
        <name>ATP</name>
        <dbReference type="ChEBI" id="CHEBI:30616"/>
    </ligand>
</feature>
<feature type="binding site" evidence="2">
    <location>
        <begin position="316"/>
        <end position="319"/>
    </location>
    <ligand>
        <name>ATP</name>
        <dbReference type="ChEBI" id="CHEBI:30616"/>
    </ligand>
</feature>
<feature type="binding site" evidence="2">
    <location>
        <begin position="367"/>
        <end position="374"/>
    </location>
    <ligand>
        <name>ATP</name>
        <dbReference type="ChEBI" id="CHEBI:30616"/>
    </ligand>
</feature>
<feature type="binding site" evidence="2">
    <location>
        <begin position="399"/>
        <end position="400"/>
    </location>
    <ligand>
        <name>ATP</name>
        <dbReference type="ChEBI" id="CHEBI:30616"/>
    </ligand>
</feature>
<feature type="binding site" evidence="2">
    <location>
        <position position="407"/>
    </location>
    <ligand>
        <name>ATP</name>
        <dbReference type="ChEBI" id="CHEBI:30616"/>
    </ligand>
</feature>
<feature type="site" description="Important for autoinhibition of adenylyltransferase activity" evidence="2">
    <location>
        <position position="234"/>
    </location>
</feature>
<feature type="modified residue" description="O-AMP-serine; by autocatalysis" evidence="2">
    <location>
        <position position="79"/>
    </location>
</feature>
<feature type="modified residue" description="O-AMP-threonine; by autocatalysis" evidence="2">
    <location>
        <position position="80"/>
    </location>
</feature>
<feature type="modified residue" description="O-AMP-threonine; by autocatalysis" evidence="2">
    <location>
        <position position="183"/>
    </location>
</feature>
<feature type="glycosylation site" description="N-linked (GlcNAc...) asparagine" evidence="3">
    <location>
        <position position="275"/>
    </location>
</feature>
<accession>Q6AY47</accession>
<keyword id="KW-0067">ATP-binding</keyword>
<keyword id="KW-0256">Endoplasmic reticulum</keyword>
<keyword id="KW-0325">Glycoprotein</keyword>
<keyword id="KW-0378">Hydrolase</keyword>
<keyword id="KW-0460">Magnesium</keyword>
<keyword id="KW-0464">Manganese</keyword>
<keyword id="KW-0472">Membrane</keyword>
<keyword id="KW-0547">Nucleotide-binding</keyword>
<keyword id="KW-0548">Nucleotidyltransferase</keyword>
<keyword id="KW-0597">Phosphoprotein</keyword>
<keyword id="KW-1185">Reference proteome</keyword>
<keyword id="KW-0677">Repeat</keyword>
<keyword id="KW-0735">Signal-anchor</keyword>
<keyword id="KW-0802">TPR repeat</keyword>
<keyword id="KW-0808">Transferase</keyword>
<keyword id="KW-0812">Transmembrane</keyword>
<keyword id="KW-1133">Transmembrane helix</keyword>
<keyword id="KW-0834">Unfolded protein response</keyword>